<keyword id="KW-0025">Alternative splicing</keyword>
<keyword id="KW-0067">ATP-binding</keyword>
<keyword id="KW-0458">Lysosome</keyword>
<keyword id="KW-0472">Membrane</keyword>
<keyword id="KW-0547">Nucleotide-binding</keyword>
<keyword id="KW-0571">Peptide transport</keyword>
<keyword id="KW-0653">Protein transport</keyword>
<keyword id="KW-1267">Proteomics identification</keyword>
<keyword id="KW-1185">Reference proteome</keyword>
<keyword id="KW-1278">Translocase</keyword>
<keyword id="KW-0812">Transmembrane</keyword>
<keyword id="KW-1133">Transmembrane helix</keyword>
<keyword id="KW-0813">Transport</keyword>
<comment type="function">
    <text evidence="7 9 11 15 16 17 18 19">ATP-dependent low-affinity peptide transporter which translocates a broad spectrum of peptides from the cytosol to the lysosomal lumen for degradation (PubMed:15863492, PubMed:17977821, PubMed:18434309, PubMed:22641697, PubMed:25646430, PubMed:30353140, PubMed:30877195, PubMed:31417173). Displays a broad peptide length specificity from 6-mer up to at least 59-mer peptides with an optimum of 23-mers (PubMed:15863492, PubMed:25646430). Binds and transports smaller and larger peptides with the same affinity (PubMed:31417173). Favors positively charged, aromatic or hydrophobic residues in the N- and C-terminal positions whereas negatively charged residues as well as asparagine and methionine are not favored (PubMed:15863492, PubMed:17977821, PubMed:18434309).</text>
</comment>
<comment type="catalytic activity">
    <reaction evidence="7 9 11 15 17 18 19">
        <text>a [oligopeptide](in) + ATP + H2O = a [oligopeptide](out) + ADP + phosphate + H(+)</text>
        <dbReference type="Rhea" id="RHEA:14429"/>
        <dbReference type="Rhea" id="RHEA-COMP:10531"/>
        <dbReference type="ChEBI" id="CHEBI:15377"/>
        <dbReference type="ChEBI" id="CHEBI:15378"/>
        <dbReference type="ChEBI" id="CHEBI:30616"/>
        <dbReference type="ChEBI" id="CHEBI:43474"/>
        <dbReference type="ChEBI" id="CHEBI:83228"/>
        <dbReference type="ChEBI" id="CHEBI:456216"/>
        <dbReference type="EC" id="7.4.2.6"/>
    </reaction>
    <physiologicalReaction direction="left-to-right" evidence="7 9 11 15 17 18 19">
        <dbReference type="Rhea" id="RHEA:14430"/>
    </physiologicalReaction>
</comment>
<comment type="activity regulation">
    <text evidence="16 19">Transport activity is limited by threshold levels of luminal peptide (PubMed:25646430). ATP hydrolysis is reduced in the presence of the spatial challenging 18-mer peptide by 50% and the branched 16-mer peptide by 75% (PubMed:31417173). Transport rate of the longer peptides is strongly reduced (PubMed:31417173).</text>
</comment>
<comment type="biophysicochemical properties">
    <kinetics>
        <KM evidence="7">6.8 uM for a 9-mer oligopeptide</KM>
        <KM evidence="16">2.8 uM for a 9-mer oligopeptide (with a macroscopic filter assay)</KM>
        <KM evidence="16">0.9 uM for a 9-mer oligopeptide (with a dual-color fluorescenceburst analysis (DCFBA))</KM>
        <KM evidence="19">15 uM for a 9-mer oligopeptide</KM>
        <KM evidence="19">8 uM for a branched 16-mer oligopeptide</KM>
        <KM evidence="19">7 uM for a spatial challenging 18-mer oligopeptide</KM>
        <KM evidence="19">4.4 uM for a 9-mer oligopeptide (in presence of mM GTP)</KM>
        <KM evidence="19">97 uM for ATP</KM>
        <KM evidence="19">87 uM for GTP</KM>
    </kinetics>
    <phDependence>
        <text evidence="7">Optimum pH is 7.0.</text>
    </phDependence>
    <temperatureDependence>
        <text evidence="7">Optimum temperature is 37 degrees Celsius.</text>
    </temperatureDependence>
</comment>
<comment type="subunit">
    <text evidence="7 15 17 18">Homodimer (PubMed:15863492, PubMed:30353140). Interacts (via TMD0 region) with LAMP1; this interaction strongly stabilizes ABCB9 and protects ABCB9 against lysosomal degradation (PubMed:22641697). Interacts (via TMD0 region) with LAMP2 (isoform LAMP-2B) (PubMed:22641697). Interacts (via TMD0) with YIF1B; this interaction allows (but is not essential) the ER-to-Golgi trafficking and strongly depends on a salt bridge within TMD0 (PubMed:30877195).</text>
</comment>
<comment type="subcellular location">
    <subcellularLocation>
        <location evidence="3 6 8 9 10 12 13 14 15 18">Lysosome membrane</location>
        <topology evidence="2 3 6 8 9 10 12 13 14">Multi-pass membrane protein</topology>
    </subcellularLocation>
    <text evidence="18">May be located in membrane rafts. Takes an intracellular route from the endoplasmic reticulum (ER), via Golgi and early endosomes to late endosomal and lysosomal compartments (PubMed:30877195).</text>
</comment>
<comment type="alternative products">
    <event type="alternative splicing"/>
    <isoform>
        <id>Q9NP78-1</id>
        <name>1</name>
        <name>12A</name>
        <name>c1-l</name>
        <sequence type="displayed"/>
    </isoform>
    <isoform>
        <id>Q9NP78-2</id>
        <name>2</name>
        <name>c1-s</name>
        <sequence type="described" ref="VSP_000027"/>
    </isoform>
    <isoform>
        <id>Q9NP78-3</id>
        <name>3</name>
        <sequence type="described" ref="VSP_000029 VSP_000030"/>
    </isoform>
    <isoform>
        <id>Q9NP78-5</id>
        <name>4</name>
        <name>12B</name>
        <sequence type="described" ref="VSP_041884 VSP_041886"/>
    </isoform>
    <isoform>
        <id>Q9NP78-6</id>
        <name>5</name>
        <name>12C</name>
        <sequence type="described" ref="VSP_041885"/>
    </isoform>
    <isoform>
        <id>Q9NP78-7</id>
        <name>6</name>
        <sequence type="described" ref="VSP_044884"/>
    </isoform>
</comment>
<comment type="tissue specificity">
    <text evidence="3 9">Highly expressed in testis, and at moderate levels in brain, spinal cord, and thyroid. Not expressed in monocytes but strongly expressed during differentiation of monocytes to dendritic cells and macrophages.</text>
</comment>
<comment type="induction">
    <text evidence="4">Not induced by interferon-gamma.</text>
</comment>
<comment type="domain">
    <text evidence="6 10 12 13 15 18">Divided into an N-terminal domain (TMD0) comprising four transmembrane helices and the following core domain (coreABCB9) (PubMed:18952056). TMD0 is required for lysosomal localization and LAMP1, LAMP2 and YIF1B interaction (PubMed:15577206, PubMed:18175933, PubMed:20377823, PubMed:22641697, PubMed:30877195). The core domain is required for homodimerization and peptide transport activity (PubMed:18952056, PubMed:20377823).</text>
</comment>
<comment type="similarity">
    <text evidence="25">Belongs to the ABC transporter superfamily. ABCB family. MHC peptide exporter (TC 3.A.1.209) subfamily.</text>
</comment>
<comment type="caution">
    <text evidence="26">Has also been detected in the endoplasmic reticulum but appears to be a lysosomal protein in vivo.</text>
</comment>
<comment type="sequence caution" evidence="25">
    <conflict type="erroneous initiation">
        <sequence resource="EMBL-CDS" id="BAA96044"/>
    </conflict>
    <text>Extended N-terminus.</text>
</comment>
<comment type="sequence caution" evidence="25">
    <conflict type="erroneous initiation">
        <sequence resource="EMBL-CDS" id="BAD66830"/>
    </conflict>
    <text>Extended N-terminus.</text>
</comment>
<comment type="online information" name="ABCMdb">
    <link uri="http://abcm2.hegelab.org/search"/>
    <text>Database for mutations in ABC proteins</text>
</comment>
<protein>
    <recommendedName>
        <fullName>ABC-type oligopeptide transporter ABCB9</fullName>
        <ecNumber evidence="7 9 11 15">7.4.2.6</ecNumber>
    </recommendedName>
    <alternativeName>
        <fullName>ATP-binding cassette sub-family B member 9</fullName>
    </alternativeName>
    <alternativeName>
        <fullName>ATP-binding cassette transporter 9</fullName>
        <shortName>ABC transporter 9 protein</shortName>
        <shortName>hABCB9</shortName>
    </alternativeName>
    <alternativeName>
        <fullName evidence="22">TAP-like protein</fullName>
        <shortName evidence="22">TAPL</shortName>
    </alternativeName>
</protein>
<organism>
    <name type="scientific">Homo sapiens</name>
    <name type="common">Human</name>
    <dbReference type="NCBI Taxonomy" id="9606"/>
    <lineage>
        <taxon>Eukaryota</taxon>
        <taxon>Metazoa</taxon>
        <taxon>Chordata</taxon>
        <taxon>Craniata</taxon>
        <taxon>Vertebrata</taxon>
        <taxon>Euteleostomi</taxon>
        <taxon>Mammalia</taxon>
        <taxon>Eutheria</taxon>
        <taxon>Euarchontoglires</taxon>
        <taxon>Primates</taxon>
        <taxon>Haplorrhini</taxon>
        <taxon>Catarrhini</taxon>
        <taxon>Hominidae</taxon>
        <taxon>Homo</taxon>
    </lineage>
</organism>
<reference key="1">
    <citation type="journal article" date="2000" name="J. Biochem.">
        <title>A half-type ABC transporter TAPL is highly conserved between rodent and man, and the human gene is not responsive to interferon-gamma in contrast to TAP1 and TAP2.</title>
        <authorList>
            <person name="Kobayashi A."/>
            <person name="Kasano M."/>
            <person name="Maeda T."/>
            <person name="Hori S."/>
            <person name="Motojima K."/>
            <person name="Suzuki M."/>
            <person name="Fujiwara T."/>
            <person name="Takahashi E."/>
            <person name="Yabe T."/>
            <person name="Tanaka K."/>
            <person name="Kasahara M."/>
            <person name="Yamaguchi Y."/>
            <person name="Maeda M."/>
        </authorList>
    </citation>
    <scope>NUCLEOTIDE SEQUENCE [MRNA] (ISOFORM 1)</scope>
    <scope>INDUCTION</scope>
    <source>
        <tissue>Embryonic kidney</tissue>
    </source>
</reference>
<reference key="2">
    <citation type="journal article" date="2000" name="J. Biol. Chem.">
        <title>Characterization of ABCB9, an ATP binding cassette protein associated with lysosomes.</title>
        <authorList>
            <person name="Zhang F."/>
            <person name="Zhang W."/>
            <person name="Liu L."/>
            <person name="Fisher C.L."/>
            <person name="Hui D."/>
            <person name="Childs S."/>
            <person name="Dorovini-Zis K."/>
            <person name="Ling V."/>
        </authorList>
    </citation>
    <scope>NUCLEOTIDE SEQUENCE [MRNA] (ISOFORMS 1 AND 2)</scope>
    <scope>SUBCELLULAR LOCATION</scope>
    <scope>TISSUE SPECIFICITY</scope>
    <source>
        <tissue>Lymphoblast</tissue>
    </source>
</reference>
<reference key="3">
    <citation type="journal article" date="2003" name="Biochem. Biophys. Res. Commun.">
        <title>Gene organization of human transporter associated with antigen processing-like (TAPL, ABCB9): analysis of alternative splicing variants and promoter activity.</title>
        <authorList>
            <person name="Kobayashi A."/>
            <person name="Hori S."/>
            <person name="Suita N."/>
            <person name="Maeda M."/>
        </authorList>
    </citation>
    <scope>NUCLEOTIDE SEQUENCE [MRNA] (ISOFORMS 4 AND 5)</scope>
    <source>
        <tissue>Cervix carcinoma</tissue>
        <tissue>Embryonic kidney</tissue>
    </source>
</reference>
<reference key="4">
    <citation type="journal article" date="2004" name="J. Mol. Biol.">
        <title>Alternative splice variants encoding unstable protein domains exist in the human brain.</title>
        <authorList>
            <person name="Homma K."/>
            <person name="Kikuno R.F."/>
            <person name="Nagase T."/>
            <person name="Ohara O."/>
            <person name="Nishikawa K."/>
        </authorList>
    </citation>
    <scope>NUCLEOTIDE SEQUENCE [MRNA] (ISOFORM 1)</scope>
    <source>
        <tissue>Brain</tissue>
    </source>
</reference>
<reference key="5">
    <citation type="journal article" date="2000" name="DNA Res.">
        <title>Prediction of the coding sequences of unidentified human genes. XVII. The complete sequences of 100 new cDNA clones from brain which code for large proteins in vitro.</title>
        <authorList>
            <person name="Nagase T."/>
            <person name="Kikuno R."/>
            <person name="Ishikawa K."/>
            <person name="Hirosawa M."/>
            <person name="Ohara O."/>
        </authorList>
    </citation>
    <scope>NUCLEOTIDE SEQUENCE [LARGE SCALE MRNA] (ISOFORM 1)</scope>
    <source>
        <tissue>Brain</tissue>
    </source>
</reference>
<reference key="6">
    <citation type="submission" date="2005-01" db="EMBL/GenBank/DDBJ databases">
        <authorList>
            <person name="Ohara O."/>
            <person name="Nagase T."/>
            <person name="Kikuno R."/>
        </authorList>
    </citation>
    <scope>SEQUENCE REVISION</scope>
</reference>
<reference key="7">
    <citation type="journal article" date="2004" name="Nat. Genet.">
        <title>Complete sequencing and characterization of 21,243 full-length human cDNAs.</title>
        <authorList>
            <person name="Ota T."/>
            <person name="Suzuki Y."/>
            <person name="Nishikawa T."/>
            <person name="Otsuki T."/>
            <person name="Sugiyama T."/>
            <person name="Irie R."/>
            <person name="Wakamatsu A."/>
            <person name="Hayashi K."/>
            <person name="Sato H."/>
            <person name="Nagai K."/>
            <person name="Kimura K."/>
            <person name="Makita H."/>
            <person name="Sekine M."/>
            <person name="Obayashi M."/>
            <person name="Nishi T."/>
            <person name="Shibahara T."/>
            <person name="Tanaka T."/>
            <person name="Ishii S."/>
            <person name="Yamamoto J."/>
            <person name="Saito K."/>
            <person name="Kawai Y."/>
            <person name="Isono Y."/>
            <person name="Nakamura Y."/>
            <person name="Nagahari K."/>
            <person name="Murakami K."/>
            <person name="Yasuda T."/>
            <person name="Iwayanagi T."/>
            <person name="Wagatsuma M."/>
            <person name="Shiratori A."/>
            <person name="Sudo H."/>
            <person name="Hosoiri T."/>
            <person name="Kaku Y."/>
            <person name="Kodaira H."/>
            <person name="Kondo H."/>
            <person name="Sugawara M."/>
            <person name="Takahashi M."/>
            <person name="Kanda K."/>
            <person name="Yokoi T."/>
            <person name="Furuya T."/>
            <person name="Kikkawa E."/>
            <person name="Omura Y."/>
            <person name="Abe K."/>
            <person name="Kamihara K."/>
            <person name="Katsuta N."/>
            <person name="Sato K."/>
            <person name="Tanikawa M."/>
            <person name="Yamazaki M."/>
            <person name="Ninomiya K."/>
            <person name="Ishibashi T."/>
            <person name="Yamashita H."/>
            <person name="Murakawa K."/>
            <person name="Fujimori K."/>
            <person name="Tanai H."/>
            <person name="Kimata M."/>
            <person name="Watanabe M."/>
            <person name="Hiraoka S."/>
            <person name="Chiba Y."/>
            <person name="Ishida S."/>
            <person name="Ono Y."/>
            <person name="Takiguchi S."/>
            <person name="Watanabe S."/>
            <person name="Yosida M."/>
            <person name="Hotuta T."/>
            <person name="Kusano J."/>
            <person name="Kanehori K."/>
            <person name="Takahashi-Fujii A."/>
            <person name="Hara H."/>
            <person name="Tanase T.-O."/>
            <person name="Nomura Y."/>
            <person name="Togiya S."/>
            <person name="Komai F."/>
            <person name="Hara R."/>
            <person name="Takeuchi K."/>
            <person name="Arita M."/>
            <person name="Imose N."/>
            <person name="Musashino K."/>
            <person name="Yuuki H."/>
            <person name="Oshima A."/>
            <person name="Sasaki N."/>
            <person name="Aotsuka S."/>
            <person name="Yoshikawa Y."/>
            <person name="Matsunawa H."/>
            <person name="Ichihara T."/>
            <person name="Shiohata N."/>
            <person name="Sano S."/>
            <person name="Moriya S."/>
            <person name="Momiyama H."/>
            <person name="Satoh N."/>
            <person name="Takami S."/>
            <person name="Terashima Y."/>
            <person name="Suzuki O."/>
            <person name="Nakagawa S."/>
            <person name="Senoh A."/>
            <person name="Mizoguchi H."/>
            <person name="Goto Y."/>
            <person name="Shimizu F."/>
            <person name="Wakebe H."/>
            <person name="Hishigaki H."/>
            <person name="Watanabe T."/>
            <person name="Sugiyama A."/>
            <person name="Takemoto M."/>
            <person name="Kawakami B."/>
            <person name="Yamazaki M."/>
            <person name="Watanabe K."/>
            <person name="Kumagai A."/>
            <person name="Itakura S."/>
            <person name="Fukuzumi Y."/>
            <person name="Fujimori Y."/>
            <person name="Komiyama M."/>
            <person name="Tashiro H."/>
            <person name="Tanigami A."/>
            <person name="Fujiwara T."/>
            <person name="Ono T."/>
            <person name="Yamada K."/>
            <person name="Fujii Y."/>
            <person name="Ozaki K."/>
            <person name="Hirao M."/>
            <person name="Ohmori Y."/>
            <person name="Kawabata A."/>
            <person name="Hikiji T."/>
            <person name="Kobatake N."/>
            <person name="Inagaki H."/>
            <person name="Ikema Y."/>
            <person name="Okamoto S."/>
            <person name="Okitani R."/>
            <person name="Kawakami T."/>
            <person name="Noguchi S."/>
            <person name="Itoh T."/>
            <person name="Shigeta K."/>
            <person name="Senba T."/>
            <person name="Matsumura K."/>
            <person name="Nakajima Y."/>
            <person name="Mizuno T."/>
            <person name="Morinaga M."/>
            <person name="Sasaki M."/>
            <person name="Togashi T."/>
            <person name="Oyama M."/>
            <person name="Hata H."/>
            <person name="Watanabe M."/>
            <person name="Komatsu T."/>
            <person name="Mizushima-Sugano J."/>
            <person name="Satoh T."/>
            <person name="Shirai Y."/>
            <person name="Takahashi Y."/>
            <person name="Nakagawa K."/>
            <person name="Okumura K."/>
            <person name="Nagase T."/>
            <person name="Nomura N."/>
            <person name="Kikuchi H."/>
            <person name="Masuho Y."/>
            <person name="Yamashita R."/>
            <person name="Nakai K."/>
            <person name="Yada T."/>
            <person name="Nakamura Y."/>
            <person name="Ohara O."/>
            <person name="Isogai T."/>
            <person name="Sugano S."/>
        </authorList>
    </citation>
    <scope>NUCLEOTIDE SEQUENCE [LARGE SCALE MRNA]</scope>
    <source>
        <tissue>Trachea</tissue>
    </source>
</reference>
<reference key="8">
    <citation type="journal article" date="2006" name="Nature">
        <title>The finished DNA sequence of human chromosome 12.</title>
        <authorList>
            <person name="Scherer S.E."/>
            <person name="Muzny D.M."/>
            <person name="Buhay C.J."/>
            <person name="Chen R."/>
            <person name="Cree A."/>
            <person name="Ding Y."/>
            <person name="Dugan-Rocha S."/>
            <person name="Gill R."/>
            <person name="Gunaratne P."/>
            <person name="Harris R.A."/>
            <person name="Hawes A.C."/>
            <person name="Hernandez J."/>
            <person name="Hodgson A.V."/>
            <person name="Hume J."/>
            <person name="Jackson A."/>
            <person name="Khan Z.M."/>
            <person name="Kovar-Smith C."/>
            <person name="Lewis L.R."/>
            <person name="Lozado R.J."/>
            <person name="Metzker M.L."/>
            <person name="Milosavljevic A."/>
            <person name="Miner G.R."/>
            <person name="Montgomery K.T."/>
            <person name="Morgan M.B."/>
            <person name="Nazareth L.V."/>
            <person name="Scott G."/>
            <person name="Sodergren E."/>
            <person name="Song X.-Z."/>
            <person name="Steffen D."/>
            <person name="Lovering R.C."/>
            <person name="Wheeler D.A."/>
            <person name="Worley K.C."/>
            <person name="Yuan Y."/>
            <person name="Zhang Z."/>
            <person name="Adams C.Q."/>
            <person name="Ansari-Lari M.A."/>
            <person name="Ayele M."/>
            <person name="Brown M.J."/>
            <person name="Chen G."/>
            <person name="Chen Z."/>
            <person name="Clerc-Blankenburg K.P."/>
            <person name="Davis C."/>
            <person name="Delgado O."/>
            <person name="Dinh H.H."/>
            <person name="Draper H."/>
            <person name="Gonzalez-Garay M.L."/>
            <person name="Havlak P."/>
            <person name="Jackson L.R."/>
            <person name="Jacob L.S."/>
            <person name="Kelly S.H."/>
            <person name="Li L."/>
            <person name="Li Z."/>
            <person name="Liu J."/>
            <person name="Liu W."/>
            <person name="Lu J."/>
            <person name="Maheshwari M."/>
            <person name="Nguyen B.-V."/>
            <person name="Okwuonu G.O."/>
            <person name="Pasternak S."/>
            <person name="Perez L.M."/>
            <person name="Plopper F.J.H."/>
            <person name="Santibanez J."/>
            <person name="Shen H."/>
            <person name="Tabor P.E."/>
            <person name="Verduzco D."/>
            <person name="Waldron L."/>
            <person name="Wang Q."/>
            <person name="Williams G.A."/>
            <person name="Zhang J."/>
            <person name="Zhou J."/>
            <person name="Allen C.C."/>
            <person name="Amin A.G."/>
            <person name="Anyalebechi V."/>
            <person name="Bailey M."/>
            <person name="Barbaria J.A."/>
            <person name="Bimage K.E."/>
            <person name="Bryant N.P."/>
            <person name="Burch P.E."/>
            <person name="Burkett C.E."/>
            <person name="Burrell K.L."/>
            <person name="Calderon E."/>
            <person name="Cardenas V."/>
            <person name="Carter K."/>
            <person name="Casias K."/>
            <person name="Cavazos I."/>
            <person name="Cavazos S.R."/>
            <person name="Ceasar H."/>
            <person name="Chacko J."/>
            <person name="Chan S.N."/>
            <person name="Chavez D."/>
            <person name="Christopoulos C."/>
            <person name="Chu J."/>
            <person name="Cockrell R."/>
            <person name="Cox C.D."/>
            <person name="Dang M."/>
            <person name="Dathorne S.R."/>
            <person name="David R."/>
            <person name="Davis C.M."/>
            <person name="Davy-Carroll L."/>
            <person name="Deshazo D.R."/>
            <person name="Donlin J.E."/>
            <person name="D'Souza L."/>
            <person name="Eaves K.A."/>
            <person name="Egan A."/>
            <person name="Emery-Cohen A.J."/>
            <person name="Escotto M."/>
            <person name="Flagg N."/>
            <person name="Forbes L.D."/>
            <person name="Gabisi A.M."/>
            <person name="Garza M."/>
            <person name="Hamilton C."/>
            <person name="Henderson N."/>
            <person name="Hernandez O."/>
            <person name="Hines S."/>
            <person name="Hogues M.E."/>
            <person name="Huang M."/>
            <person name="Idlebird D.G."/>
            <person name="Johnson R."/>
            <person name="Jolivet A."/>
            <person name="Jones S."/>
            <person name="Kagan R."/>
            <person name="King L.M."/>
            <person name="Leal B."/>
            <person name="Lebow H."/>
            <person name="Lee S."/>
            <person name="LeVan J.M."/>
            <person name="Lewis L.C."/>
            <person name="London P."/>
            <person name="Lorensuhewa L.M."/>
            <person name="Loulseged H."/>
            <person name="Lovett D.A."/>
            <person name="Lucier A."/>
            <person name="Lucier R.L."/>
            <person name="Ma J."/>
            <person name="Madu R.C."/>
            <person name="Mapua P."/>
            <person name="Martindale A.D."/>
            <person name="Martinez E."/>
            <person name="Massey E."/>
            <person name="Mawhiney S."/>
            <person name="Meador M.G."/>
            <person name="Mendez S."/>
            <person name="Mercado C."/>
            <person name="Mercado I.C."/>
            <person name="Merritt C.E."/>
            <person name="Miner Z.L."/>
            <person name="Minja E."/>
            <person name="Mitchell T."/>
            <person name="Mohabbat F."/>
            <person name="Mohabbat K."/>
            <person name="Montgomery B."/>
            <person name="Moore N."/>
            <person name="Morris S."/>
            <person name="Munidasa M."/>
            <person name="Ngo R.N."/>
            <person name="Nguyen N.B."/>
            <person name="Nickerson E."/>
            <person name="Nwaokelemeh O.O."/>
            <person name="Nwokenkwo S."/>
            <person name="Obregon M."/>
            <person name="Oguh M."/>
            <person name="Oragunye N."/>
            <person name="Oviedo R.J."/>
            <person name="Parish B.J."/>
            <person name="Parker D.N."/>
            <person name="Parrish J."/>
            <person name="Parks K.L."/>
            <person name="Paul H.A."/>
            <person name="Payton B.A."/>
            <person name="Perez A."/>
            <person name="Perrin W."/>
            <person name="Pickens A."/>
            <person name="Primus E.L."/>
            <person name="Pu L.-L."/>
            <person name="Puazo M."/>
            <person name="Quiles M.M."/>
            <person name="Quiroz J.B."/>
            <person name="Rabata D."/>
            <person name="Reeves K."/>
            <person name="Ruiz S.J."/>
            <person name="Shao H."/>
            <person name="Sisson I."/>
            <person name="Sonaike T."/>
            <person name="Sorelle R.P."/>
            <person name="Sutton A.E."/>
            <person name="Svatek A.F."/>
            <person name="Svetz L.A."/>
            <person name="Tamerisa K.S."/>
            <person name="Taylor T.R."/>
            <person name="Teague B."/>
            <person name="Thomas N."/>
            <person name="Thorn R.D."/>
            <person name="Trejos Z.Y."/>
            <person name="Trevino B.K."/>
            <person name="Ukegbu O.N."/>
            <person name="Urban J.B."/>
            <person name="Vasquez L.I."/>
            <person name="Vera V.A."/>
            <person name="Villasana D.M."/>
            <person name="Wang L."/>
            <person name="Ward-Moore S."/>
            <person name="Warren J.T."/>
            <person name="Wei X."/>
            <person name="White F."/>
            <person name="Williamson A.L."/>
            <person name="Wleczyk R."/>
            <person name="Wooden H.S."/>
            <person name="Wooden S.H."/>
            <person name="Yen J."/>
            <person name="Yoon L."/>
            <person name="Yoon V."/>
            <person name="Zorrilla S.E."/>
            <person name="Nelson D."/>
            <person name="Kucherlapati R."/>
            <person name="Weinstock G."/>
            <person name="Gibbs R.A."/>
        </authorList>
    </citation>
    <scope>NUCLEOTIDE SEQUENCE [LARGE SCALE GENOMIC DNA]</scope>
</reference>
<reference key="9">
    <citation type="journal article" date="2004" name="Genome Res.">
        <title>The status, quality, and expansion of the NIH full-length cDNA project: the Mammalian Gene Collection (MGC).</title>
        <authorList>
            <consortium name="The MGC Project Team"/>
        </authorList>
    </citation>
    <scope>NUCLEOTIDE SEQUENCE [LARGE SCALE MRNA] (ISOFORM 3)</scope>
    <source>
        <tissue>Brain</tissue>
    </source>
</reference>
<reference key="10">
    <citation type="journal article" date="2004" name="Biol. Pharm. Bull.">
        <title>Membrane localization of transporter associated with antigen processing (TAP)-like (ABCB9) visualized in vivo with a fluorescence protein-fusion technique.</title>
        <authorList>
            <person name="Kobayashi A."/>
            <person name="Maeda T."/>
            <person name="Maeda M."/>
        </authorList>
    </citation>
    <scope>SUBCELLULAR LOCATION</scope>
    <scope>DOMAIN</scope>
</reference>
<reference key="11">
    <citation type="journal article" date="2005" name="J. Biol. Chem.">
        <title>Selective and ATP-dependent translocation of peptides by the homodimeric ATP binding cassette transporter TAP-like (ABCB9).</title>
        <authorList>
            <person name="Wolters J.C."/>
            <person name="Abele R."/>
            <person name="Tampe R."/>
        </authorList>
    </citation>
    <scope>FUNCTION</scope>
    <scope>BIOPHYSICOCHEMICAL PROPERTIES</scope>
    <scope>SUBUNIT</scope>
    <scope>CATALYTIC ACTIVITY</scope>
</reference>
<reference key="12">
    <citation type="journal article" date="2007" name="J. Biol. Chem.">
        <title>Identification of a lysosomal peptide transport system induced during dendritic cell development.</title>
        <authorList>
            <person name="Demirel O."/>
            <person name="Waibler Z."/>
            <person name="Kalinke U."/>
            <person name="Grunebach F."/>
            <person name="Appel S."/>
            <person name="Brossart P."/>
            <person name="Hasilik A."/>
            <person name="Tampe R."/>
            <person name="Abele R."/>
        </authorList>
    </citation>
    <scope>FUNCTION</scope>
    <scope>SUBCELLULAR LOCATION</scope>
    <scope>TISSUE SPECIFICITY</scope>
    <scope>CATALYTIC ACTIVITY</scope>
</reference>
<reference key="13">
    <citation type="journal article" date="2007" name="Traffic">
        <title>Integral and associated lysosomal membrane proteins.</title>
        <authorList>
            <person name="Schroeder B."/>
            <person name="Wrocklage C."/>
            <person name="Pan C."/>
            <person name="Jaeger R."/>
            <person name="Koesters B."/>
            <person name="Schaefer H."/>
            <person name="Elsaesser H.-P."/>
            <person name="Mann M."/>
            <person name="Hasilik A."/>
        </authorList>
    </citation>
    <scope>SUBCELLULAR LOCATION [LARGE SCALE ANALYSIS]</scope>
    <source>
        <tissue>Placenta</tissue>
    </source>
</reference>
<reference key="14">
    <citation type="journal article" date="2008" name="Biochem. Biophys. Res. Commun.">
        <title>Functional dissection of transmembrane domains of human TAP-like (ABCB9).</title>
        <authorList>
            <person name="Kamakura A."/>
            <person name="Fujimoto Y."/>
            <person name="Motohashi Y."/>
            <person name="Ohashi K."/>
            <person name="Ohashi-Kobayashi A."/>
            <person name="Maeda M."/>
        </authorList>
    </citation>
    <scope>SUBCELLULAR LOCATION</scope>
    <scope>DOMAIN</scope>
    <scope>SUBUNIT</scope>
</reference>
<reference key="15">
    <citation type="journal article" date="2008" name="Biol. Pharm. Bull.">
        <title>Biochemical characterization of transporter associated with antigen processing (TAP)-like (ABCB9) expressed in insect cells.</title>
        <authorList>
            <person name="Ohara T."/>
            <person name="Ohashi-Kobayashi A."/>
            <person name="Maeda M."/>
        </authorList>
    </citation>
    <scope>SUBCELLULAR LOCATION</scope>
    <scope>DOMAIN</scope>
</reference>
<reference key="16">
    <citation type="journal article" date="2008" name="J. Biol. Chem.">
        <title>Peptide specificity and lipid activation of the lysosomal transport complex ABCB9 (TAPL).</title>
        <authorList>
            <person name="Zhao C."/>
            <person name="Haase W."/>
            <person name="Tampe R."/>
            <person name="Abele R."/>
        </authorList>
    </citation>
    <scope>FUNCTION</scope>
    <scope>CATALYTIC ACTIVITY</scope>
</reference>
<reference key="17">
    <citation type="journal article" date="2010" name="Traffic">
        <title>Tuning the cellular trafficking of the lysosomal peptide transporter TAPL by its N-terminal domain.</title>
        <authorList>
            <person name="Demirel O."/>
            <person name="Bangert I."/>
            <person name="Tampe R."/>
            <person name="Abele R."/>
        </authorList>
    </citation>
    <scope>SUBCELLULAR LOCATION</scope>
    <scope>DOMAIN</scope>
    <scope>MUTAGENESIS OF 136-LYS-LYS-137</scope>
</reference>
<reference key="18">
    <citation type="journal article" date="2011" name="Biol. Pharm. Bull.">
        <title>Transporter associated with antigen processing-like (ABCB9) stably expressed in Chinese hamster ovary-K1 cells is sorted to the microdomains of lysosomal membranes.</title>
        <authorList>
            <person name="Fujimoto Y."/>
            <person name="Kamakura A."/>
            <person name="Motohashi Y."/>
            <person name="Ohashi-Kobayashi A."/>
            <person name="Maeda M."/>
        </authorList>
    </citation>
    <scope>SUBCELLULAR LOCATION</scope>
</reference>
<reference key="19">
    <citation type="journal article" date="2012" name="J. Cell Sci.">
        <title>The lysosomal polypeptide transporter TAPL is stabilized by interaction with LAMP-1 and LAMP-2.</title>
        <authorList>
            <person name="Demirel O."/>
            <person name="Jan I."/>
            <person name="Wolters D."/>
            <person name="Blanz J."/>
            <person name="Saftig P."/>
            <person name="Tampe R."/>
            <person name="Abele R."/>
        </authorList>
    </citation>
    <scope>SUBCELLULAR LOCATION</scope>
    <scope>INTERACTION WITH LAMP1 AND LAMP2 (ISOFORM LAMP-2B)</scope>
    <scope>FUNCTION</scope>
    <scope>CATALYTIC ACTIVITY</scope>
    <scope>DOMAIN</scope>
</reference>
<reference key="20">
    <citation type="journal article" date="2015" name="Proc. Natl. Acad. Sci. U.S.A.">
        <title>Single liposome analysis of peptide translocation by the ABC transporter TAPL.</title>
        <authorList>
            <person name="Zollmann T."/>
            <person name="Moiset G."/>
            <person name="Tumulka F."/>
            <person name="Tampe R."/>
            <person name="Poolman B."/>
            <person name="Abele R."/>
        </authorList>
    </citation>
    <scope>FUNCTION</scope>
    <scope>CATALYTIC ACTIVITY</scope>
    <scope>BIOPHYSICOCHEMICAL PROPERTIES</scope>
    <scope>ACTIVITY REGULATION</scope>
</reference>
<reference key="21">
    <citation type="journal article" date="2018" name="Sci. Rep.">
        <title>Structural and functional insights into the interaction and targeting hub TMD0 of the polypeptide transporter TAPL.</title>
        <authorList>
            <person name="Bock C."/>
            <person name="Loehr F."/>
            <person name="Tumulka F."/>
            <person name="Reichel K."/>
            <person name="Wuerz J."/>
            <person name="Hummer G."/>
            <person name="Schaefer L."/>
            <person name="Tampe R."/>
            <person name="Joseph B."/>
            <person name="Bernhard F."/>
            <person name="Doetsch V."/>
            <person name="Abele R."/>
        </authorList>
    </citation>
    <scope>FUNCTION</scope>
    <scope>CATALYTIC ACTIVITY</scope>
    <scope>SUBUNIT</scope>
</reference>
<reference key="22">
    <citation type="journal article" date="2019" name="J. Biol. Chem.">
        <title>Lysosomal targeting of the ABC transporter TAPL is determined by membrane-localized charged residues.</title>
        <authorList>
            <person name="Graab P."/>
            <person name="Bock C."/>
            <person name="Weiss K."/>
            <person name="Hirth A."/>
            <person name="Koller N."/>
            <person name="Braner M."/>
            <person name="Jung J."/>
            <person name="Loehr F."/>
            <person name="Tampe R."/>
            <person name="Behrends C."/>
            <person name="Abele R."/>
        </authorList>
    </citation>
    <scope>SUBCELLULAR LOCATION</scope>
    <scope>MUTAGENESIS OF ASP-17; ASP-45; ASP-49; ARG-57 AND LYS-100</scope>
    <scope>INTERACTION WITH YIF1B</scope>
    <scope>DOMAIN</scope>
    <scope>SITE</scope>
    <scope>FUNCTION</scope>
    <scope>CATALYTIC ACTIVITY</scope>
</reference>
<reference key="23">
    <citation type="journal article" date="2019" name="Sci. Rep.">
        <title>Peptide translocation by the lysosomal ABC transporter TAPL is regulated by coupling efficiency and activation energy.</title>
        <authorList>
            <person name="Bock C."/>
            <person name="Zollmann T."/>
            <person name="Lindt K.A."/>
            <person name="Tampe R."/>
            <person name="Abele R."/>
        </authorList>
    </citation>
    <scope>MUTAGENESIS OF LYS-545 AND HIS-699</scope>
    <scope>CATALYTIC ACTIVITY</scope>
    <scope>FUNCTION</scope>
    <scope>BIOPHYSICOCHEMICAL PROPERTIES</scope>
    <scope>ACTIVITY REGULATION</scope>
</reference>
<reference key="24">
    <citation type="journal article" date="2002" name="J. Hum. Genet.">
        <title>Three hundred twenty-six genetic variations in genes encoding nine members of ATP-binding cassette, subfamily B (ABCB/MDR/TAP), in the Japanese population.</title>
        <authorList>
            <person name="Saito S."/>
            <person name="Iida A."/>
            <person name="Sekine A."/>
            <person name="Miura Y."/>
            <person name="Ogawa C."/>
            <person name="Kawauchi S."/>
            <person name="Higuchi S."/>
            <person name="Nakamura Y."/>
        </authorList>
    </citation>
    <scope>VARIANT MET-121</scope>
</reference>
<gene>
    <name evidence="27" type="primary">ABCB9</name>
    <name evidence="21" type="synonym">KIAA1520</name>
</gene>
<accession>Q9NP78</accession>
<accession>B4E2J0</accession>
<accession>Q5W9G7</accession>
<accession>Q769F3</accession>
<accession>Q769F4</accession>
<accession>Q96AB1</accession>
<accession>Q9P208</accession>
<proteinExistence type="evidence at protein level"/>
<feature type="chain" id="PRO_0000000252" description="ABC-type oligopeptide transporter ABCB9">
    <location>
        <begin position="1"/>
        <end position="766"/>
    </location>
</feature>
<feature type="transmembrane region" description="Helical" evidence="2">
    <location>
        <begin position="7"/>
        <end position="27"/>
    </location>
</feature>
<feature type="transmembrane region" description="Helical" evidence="2">
    <location>
        <begin position="47"/>
        <end position="67"/>
    </location>
</feature>
<feature type="transmembrane region" description="Helical" evidence="2">
    <location>
        <begin position="84"/>
        <end position="104"/>
    </location>
</feature>
<feature type="transmembrane region" description="Helical" evidence="2">
    <location>
        <begin position="116"/>
        <end position="136"/>
    </location>
</feature>
<feature type="transmembrane region" description="Helical" evidence="2">
    <location>
        <begin position="185"/>
        <end position="205"/>
    </location>
</feature>
<feature type="transmembrane region" description="Helical" evidence="2">
    <location>
        <begin position="225"/>
        <end position="245"/>
    </location>
</feature>
<feature type="transmembrane region" description="Helical" evidence="2">
    <location>
        <begin position="319"/>
        <end position="339"/>
    </location>
</feature>
<feature type="transmembrane region" description="Helical" evidence="2">
    <location>
        <begin position="416"/>
        <end position="436"/>
    </location>
</feature>
<feature type="domain" description="ABC transmembrane type-1" evidence="2">
    <location>
        <begin position="188"/>
        <end position="471"/>
    </location>
</feature>
<feature type="domain" description="ABC transporter" evidence="1">
    <location>
        <begin position="504"/>
        <end position="740"/>
    </location>
</feature>
<feature type="binding site" evidence="1">
    <location>
        <begin position="539"/>
        <end position="546"/>
    </location>
    <ligand>
        <name>ATP</name>
        <dbReference type="ChEBI" id="CHEBI:30616"/>
    </ligand>
</feature>
<feature type="site" description="Intramolecular salt bridge with Arg-57. Essential for the release from the ER" evidence="18">
    <location>
        <position position="17"/>
    </location>
</feature>
<feature type="site" description="Important for the second trafficking step from the Golgi to the endosomal and lysosomal compartments" evidence="18">
    <location>
        <position position="45"/>
    </location>
</feature>
<feature type="site" description="Important for the second trafficking step from the Golgi to the endosomal and lysosomal compartments" evidence="18">
    <location>
        <position position="49"/>
    </location>
</feature>
<feature type="site" description="Intramolecular salt bridge with Asp-17. Essential for the release from the ER" evidence="18">
    <location>
        <position position="57"/>
    </location>
</feature>
<feature type="splice variant" id="VSP_000027" description="In isoform 2." evidence="20">
    <location>
        <begin position="418"/>
        <end position="460"/>
    </location>
</feature>
<feature type="splice variant" id="VSP_044884" description="In isoform 6." evidence="25">
    <location>
        <begin position="461"/>
        <end position="523"/>
    </location>
</feature>
<feature type="splice variant" id="VSP_000029" description="In isoform 3." evidence="24">
    <original>ISLVSQEPVLFARSI</original>
    <variation>VCARAWATLLRPFCI</variation>
    <location>
        <begin position="582"/>
        <end position="596"/>
    </location>
</feature>
<feature type="splice variant" id="VSP_000030" description="In isoform 3." evidence="24">
    <location>
        <begin position="597"/>
        <end position="766"/>
    </location>
</feature>
<feature type="splice variant" id="VSP_041884" description="In isoform 4." evidence="23">
    <original>IQQ</original>
    <variation>CAG</variation>
    <location>
        <begin position="681"/>
        <end position="683"/>
    </location>
</feature>
<feature type="splice variant" id="VSP_041885" description="In isoform 5." evidence="23">
    <location>
        <begin position="682"/>
        <end position="766"/>
    </location>
</feature>
<feature type="splice variant" id="VSP_041886" description="In isoform 4." evidence="23">
    <location>
        <begin position="684"/>
        <end position="766"/>
    </location>
</feature>
<feature type="sequence variant" id="VAR_013701" description="In dbSNP:rs3803002." evidence="5">
    <original>V</original>
    <variation>M</variation>
    <location>
        <position position="121"/>
    </location>
</feature>
<feature type="mutagenesis site" description="Loss of lysosomal localization. Does not affect interaction between coreABCB9 and TMD0 domains. Does not affect dimerization. Does not affect peptide transport activity. Decreases interaction with YIF1B." evidence="18">
    <original>D</original>
    <variation>N</variation>
    <location>
        <position position="17"/>
    </location>
</feature>
<feature type="mutagenesis site" description="Loss of lysosomal localization. Does not affect lysosomal localization; when associated with D-57. Does not affect interaction between coreABCB9 and TMD0 domains. Does not affect interaction between coreABCB9 and TMD0 domains; when associated with D-57. Does not affect interaction between coreABCB9 and TMD0 domains; when associated with D-100." evidence="18">
    <original>D</original>
    <variation>R</variation>
    <location>
        <position position="17"/>
    </location>
</feature>
<feature type="mutagenesis site" description="Loss of lysosomal localization; when assosiated with K-49. Loss of lysosomal localization; when assosiated with K-49 and D-100. Does not affect peptide transport activity; when assosiated with K-49 and D-100." evidence="18">
    <original>D</original>
    <variation>K</variation>
    <location>
        <position position="45"/>
    </location>
</feature>
<feature type="mutagenesis site" description="Decreases lysosomal localization; when associated with N-49." evidence="18">
    <original>D</original>
    <variation>N</variation>
    <location>
        <position position="45"/>
    </location>
</feature>
<feature type="mutagenesis site" description="Loss of lysosomal localization; when assosiated with K-45. Loss of lysosomal localization; when assosiated with K-45 and D-100. Does not affect peptide transport activity; when assosiated with K-45 and D-100." evidence="18">
    <original>D</original>
    <variation>K</variation>
    <location>
        <position position="49"/>
    </location>
</feature>
<feature type="mutagenesis site" description="Decreases lysosomal localization; when associated with N-45." evidence="18">
    <original>D</original>
    <variation>N</variation>
    <location>
        <position position="49"/>
    </location>
</feature>
<feature type="mutagenesis site" description="Decreases lysosomal localization. Loss of lysosomal localization; when associated with A-100." evidence="18">
    <original>R</original>
    <variation>A</variation>
    <location>
        <position position="57"/>
    </location>
</feature>
<feature type="mutagenesis site" description="Loss of lysosomal localization. Does not affect lysosomal localization; when associated with R-17. Does not affect interaction between coreABCB9 and TMD0 domains. Does not affect interaction between coreABCB9 and TMD0 domains; when associated with R-17." evidence="18">
    <original>R</original>
    <variation>D</variation>
    <location>
        <position position="57"/>
    </location>
</feature>
<feature type="mutagenesis site" description="Decreases lysosomal localization. Loss of lysosomal localization; when associated with A-57." evidence="18">
    <original>K</original>
    <variation>A</variation>
    <location>
        <position position="100"/>
    </location>
</feature>
<feature type="mutagenesis site" description="Decreases lysosomal localization. Loss of lysosomal localization; when assosiated with R-17. Loss of lysosomal localization; when assosiated with K-45 and K-49. Does not affect peptide transport activity; when assosiated with K-45 and K-49. Does not affect interaction between coreABCB9 and TMD0 domains. Does not affect interaction between coreABCB9 and TMD0 domains; when associated with R-17." evidence="18">
    <original>K</original>
    <variation>D</variation>
    <location>
        <position position="100"/>
    </location>
</feature>
<feature type="mutagenesis site" description="No effect on lysosomal localization." evidence="13">
    <original>LL</original>
    <variation>AA</variation>
    <location>
        <begin position="136"/>
        <end position="137"/>
    </location>
</feature>
<feature type="mutagenesis site" description="Loss of peptide transport activity; whena ssociated with A-699." evidence="19">
    <original>K</original>
    <variation>A</variation>
    <location>
        <position position="545"/>
    </location>
</feature>
<feature type="mutagenesis site" description="Loss of peptide transport activity; whena ssociated with A-545." evidence="19">
    <original>H</original>
    <variation>A</variation>
    <location>
        <position position="699"/>
    </location>
</feature>
<dbReference type="EC" id="7.4.2.6" evidence="7 9 11 15"/>
<dbReference type="EMBL" id="AB045381">
    <property type="protein sequence ID" value="BAA97989.2"/>
    <property type="molecule type" value="mRNA"/>
</dbReference>
<dbReference type="EMBL" id="AF216494">
    <property type="protein sequence ID" value="AAF89993.1"/>
    <property type="molecule type" value="mRNA"/>
</dbReference>
<dbReference type="EMBL" id="AB112582">
    <property type="protein sequence ID" value="BAC98409.1"/>
    <property type="molecule type" value="mRNA"/>
</dbReference>
<dbReference type="EMBL" id="AB112583">
    <property type="protein sequence ID" value="BAC98410.1"/>
    <property type="molecule type" value="mRNA"/>
</dbReference>
<dbReference type="EMBL" id="AB177852">
    <property type="protein sequence ID" value="BAD66830.1"/>
    <property type="status" value="ALT_INIT"/>
    <property type="molecule type" value="mRNA"/>
</dbReference>
<dbReference type="EMBL" id="AB040953">
    <property type="protein sequence ID" value="BAA96044.2"/>
    <property type="status" value="ALT_INIT"/>
    <property type="molecule type" value="mRNA"/>
</dbReference>
<dbReference type="EMBL" id="AK304295">
    <property type="protein sequence ID" value="BAG65152.1"/>
    <property type="molecule type" value="mRNA"/>
</dbReference>
<dbReference type="EMBL" id="AC026362">
    <property type="status" value="NOT_ANNOTATED_CDS"/>
    <property type="molecule type" value="Genomic_DNA"/>
</dbReference>
<dbReference type="EMBL" id="AC027290">
    <property type="status" value="NOT_ANNOTATED_CDS"/>
    <property type="molecule type" value="Genomic_DNA"/>
</dbReference>
<dbReference type="EMBL" id="BC017348">
    <property type="protein sequence ID" value="AAH17348.1"/>
    <property type="molecule type" value="mRNA"/>
</dbReference>
<dbReference type="CCDS" id="CCDS58286.1">
    <molecule id="Q9NP78-7"/>
</dbReference>
<dbReference type="CCDS" id="CCDS58287.1">
    <molecule id="Q9NP78-6"/>
</dbReference>
<dbReference type="CCDS" id="CCDS58288.1">
    <molecule id="Q9NP78-5"/>
</dbReference>
<dbReference type="CCDS" id="CCDS9241.1">
    <molecule id="Q9NP78-1"/>
</dbReference>
<dbReference type="RefSeq" id="NP_001229942.1">
    <molecule id="Q9NP78-7"/>
    <property type="nucleotide sequence ID" value="NM_001243013.2"/>
</dbReference>
<dbReference type="RefSeq" id="NP_001229943.1">
    <molecule id="Q9NP78-6"/>
    <property type="nucleotide sequence ID" value="NM_001243014.2"/>
</dbReference>
<dbReference type="RefSeq" id="NP_062570.1">
    <molecule id="Q9NP78-2"/>
    <property type="nucleotide sequence ID" value="NM_019624.4"/>
</dbReference>
<dbReference type="RefSeq" id="NP_062571.1">
    <molecule id="Q9NP78-1"/>
    <property type="nucleotide sequence ID" value="NM_019625.4"/>
</dbReference>
<dbReference type="RefSeq" id="NP_982269.2">
    <molecule id="Q9NP78-5"/>
    <property type="nucleotide sequence ID" value="NM_203444.4"/>
</dbReference>
<dbReference type="RefSeq" id="XP_011536397.1">
    <molecule id="Q9NP78-1"/>
    <property type="nucleotide sequence ID" value="XM_011538095.3"/>
</dbReference>
<dbReference type="RefSeq" id="XP_011536398.1">
    <molecule id="Q9NP78-1"/>
    <property type="nucleotide sequence ID" value="XM_011538096.3"/>
</dbReference>
<dbReference type="RefSeq" id="XP_016874592.1">
    <molecule id="Q9NP78-1"/>
    <property type="nucleotide sequence ID" value="XM_017019103.2"/>
</dbReference>
<dbReference type="RefSeq" id="XP_047284580.1">
    <molecule id="Q9NP78-2"/>
    <property type="nucleotide sequence ID" value="XM_047428624.1"/>
</dbReference>
<dbReference type="RefSeq" id="XP_054227568.1">
    <molecule id="Q9NP78-1"/>
    <property type="nucleotide sequence ID" value="XM_054371593.1"/>
</dbReference>
<dbReference type="RefSeq" id="XP_054227569.1">
    <molecule id="Q9NP78-1"/>
    <property type="nucleotide sequence ID" value="XM_054371594.1"/>
</dbReference>
<dbReference type="RefSeq" id="XP_054227570.1">
    <molecule id="Q9NP78-1"/>
    <property type="nucleotide sequence ID" value="XM_054371595.1"/>
</dbReference>
<dbReference type="RefSeq" id="XP_054227571.1">
    <molecule id="Q9NP78-1"/>
    <property type="nucleotide sequence ID" value="XM_054371596.1"/>
</dbReference>
<dbReference type="RefSeq" id="XP_054227572.1">
    <molecule id="Q9NP78-1"/>
    <property type="nucleotide sequence ID" value="XM_054371597.1"/>
</dbReference>
<dbReference type="RefSeq" id="XP_054227573.1">
    <molecule id="Q9NP78-1"/>
    <property type="nucleotide sequence ID" value="XM_054371598.1"/>
</dbReference>
<dbReference type="RefSeq" id="XP_054227574.1">
    <molecule id="Q9NP78-1"/>
    <property type="nucleotide sequence ID" value="XM_054371599.1"/>
</dbReference>
<dbReference type="RefSeq" id="XP_054227575.1">
    <molecule id="Q9NP78-2"/>
    <property type="nucleotide sequence ID" value="XM_054371600.1"/>
</dbReference>
<dbReference type="RefSeq" id="XP_054227576.1">
    <molecule id="Q9NP78-2"/>
    <property type="nucleotide sequence ID" value="XM_054371601.1"/>
</dbReference>
<dbReference type="RefSeq" id="XP_054227577.1">
    <molecule id="Q9NP78-7"/>
    <property type="nucleotide sequence ID" value="XM_054371602.1"/>
</dbReference>
<dbReference type="SMR" id="Q9NP78"/>
<dbReference type="BioGRID" id="117021">
    <property type="interactions" value="41"/>
</dbReference>
<dbReference type="FunCoup" id="Q9NP78">
    <property type="interactions" value="506"/>
</dbReference>
<dbReference type="IntAct" id="Q9NP78">
    <property type="interactions" value="30"/>
</dbReference>
<dbReference type="STRING" id="9606.ENSP00000440288"/>
<dbReference type="ChEMBL" id="CHEMBL1293189"/>
<dbReference type="TCDB" id="3.A.1.209.2">
    <property type="family name" value="the atp-binding cassette (abc) superfamily"/>
</dbReference>
<dbReference type="GlyGen" id="Q9NP78">
    <property type="glycosylation" value="3 sites, 1 O-linked glycan (3 sites)"/>
</dbReference>
<dbReference type="iPTMnet" id="Q9NP78"/>
<dbReference type="PhosphoSitePlus" id="Q9NP78"/>
<dbReference type="BioMuta" id="ABCB9"/>
<dbReference type="DMDM" id="22095458"/>
<dbReference type="jPOST" id="Q9NP78"/>
<dbReference type="MassIVE" id="Q9NP78"/>
<dbReference type="PaxDb" id="9606-ENSP00000440288"/>
<dbReference type="PeptideAtlas" id="Q9NP78"/>
<dbReference type="ProteomicsDB" id="5823"/>
<dbReference type="ProteomicsDB" id="81917">
    <molecule id="Q9NP78-1"/>
</dbReference>
<dbReference type="ProteomicsDB" id="81918">
    <molecule id="Q9NP78-2"/>
</dbReference>
<dbReference type="ProteomicsDB" id="81919">
    <molecule id="Q9NP78-3"/>
</dbReference>
<dbReference type="ProteomicsDB" id="81920">
    <molecule id="Q9NP78-5"/>
</dbReference>
<dbReference type="ProteomicsDB" id="81921">
    <molecule id="Q9NP78-6"/>
</dbReference>
<dbReference type="Antibodypedia" id="31719">
    <property type="antibodies" value="245 antibodies from 29 providers"/>
</dbReference>
<dbReference type="DNASU" id="23457"/>
<dbReference type="Ensembl" id="ENST00000280560.13">
    <molecule id="Q9NP78-1"/>
    <property type="protein sequence ID" value="ENSP00000280560.8"/>
    <property type="gene ID" value="ENSG00000150967.19"/>
</dbReference>
<dbReference type="Ensembl" id="ENST00000344275.11">
    <molecule id="Q9NP78-6"/>
    <property type="protein sequence ID" value="ENSP00000456813.1"/>
    <property type="gene ID" value="ENSG00000150967.19"/>
</dbReference>
<dbReference type="Ensembl" id="ENST00000346530.9">
    <molecule id="Q9NP78-2"/>
    <property type="protein sequence ID" value="ENSP00000280559.7"/>
    <property type="gene ID" value="ENSG00000150967.19"/>
</dbReference>
<dbReference type="Ensembl" id="ENST00000392439.7">
    <molecule id="Q9NP78-1"/>
    <property type="protein sequence ID" value="ENSP00000376234.3"/>
    <property type="gene ID" value="ENSG00000150967.19"/>
</dbReference>
<dbReference type="Ensembl" id="ENST00000442833.6">
    <molecule id="Q9NP78-5"/>
    <property type="protein sequence ID" value="ENSP00000456375.1"/>
    <property type="gene ID" value="ENSG00000150967.19"/>
</dbReference>
<dbReference type="Ensembl" id="ENST00000540285.5">
    <molecule id="Q9NP78-7"/>
    <property type="protein sequence ID" value="ENSP00000441734.1"/>
    <property type="gene ID" value="ENSG00000150967.19"/>
</dbReference>
<dbReference type="Ensembl" id="ENST00000542678.5">
    <molecule id="Q9NP78-1"/>
    <property type="protein sequence ID" value="ENSP00000440288.1"/>
    <property type="gene ID" value="ENSG00000150967.19"/>
</dbReference>
<dbReference type="GeneID" id="23457"/>
<dbReference type="KEGG" id="hsa:23457"/>
<dbReference type="MANE-Select" id="ENST00000280560.13">
    <property type="protein sequence ID" value="ENSP00000280560.8"/>
    <property type="RefSeq nucleotide sequence ID" value="NM_019625.4"/>
    <property type="RefSeq protein sequence ID" value="NP_062571.1"/>
</dbReference>
<dbReference type="UCSC" id="uc001udm.5">
    <molecule id="Q9NP78-1"/>
    <property type="organism name" value="human"/>
</dbReference>
<dbReference type="AGR" id="HGNC:50"/>
<dbReference type="CTD" id="23457"/>
<dbReference type="DisGeNET" id="23457"/>
<dbReference type="GeneCards" id="ABCB9"/>
<dbReference type="HGNC" id="HGNC:50">
    <property type="gene designation" value="ABCB9"/>
</dbReference>
<dbReference type="HPA" id="ENSG00000150967">
    <property type="expression patterns" value="Tissue enhanced (brain)"/>
</dbReference>
<dbReference type="MIM" id="605453">
    <property type="type" value="gene"/>
</dbReference>
<dbReference type="neXtProt" id="NX_Q9NP78"/>
<dbReference type="OpenTargets" id="ENSG00000150967"/>
<dbReference type="PharmGKB" id="PA24391"/>
<dbReference type="VEuPathDB" id="HostDB:ENSG00000150967"/>
<dbReference type="eggNOG" id="KOG0058">
    <property type="taxonomic scope" value="Eukaryota"/>
</dbReference>
<dbReference type="GeneTree" id="ENSGT00940000155431"/>
<dbReference type="InParanoid" id="Q9NP78"/>
<dbReference type="OrthoDB" id="6500128at2759"/>
<dbReference type="PAN-GO" id="Q9NP78">
    <property type="GO annotations" value="8 GO annotations based on evolutionary models"/>
</dbReference>
<dbReference type="PhylomeDB" id="Q9NP78"/>
<dbReference type="TreeFam" id="TF105197"/>
<dbReference type="BRENDA" id="7.4.2.5">
    <property type="organism ID" value="2681"/>
</dbReference>
<dbReference type="PathwayCommons" id="Q9NP78"/>
<dbReference type="Reactome" id="R-HSA-382556">
    <property type="pathway name" value="ABC-family proteins mediated transport"/>
</dbReference>
<dbReference type="SABIO-RK" id="Q9NP78"/>
<dbReference type="SignaLink" id="Q9NP78"/>
<dbReference type="BioGRID-ORCS" id="23457">
    <property type="hits" value="15 hits in 1160 CRISPR screens"/>
</dbReference>
<dbReference type="ChiTaRS" id="ABCB9">
    <property type="organism name" value="human"/>
</dbReference>
<dbReference type="GeneWiki" id="ABCB9"/>
<dbReference type="GenomeRNAi" id="23457"/>
<dbReference type="Pharos" id="Q9NP78">
    <property type="development level" value="Tbio"/>
</dbReference>
<dbReference type="PRO" id="PR:Q9NP78"/>
<dbReference type="Proteomes" id="UP000005640">
    <property type="component" value="Chromosome 12"/>
</dbReference>
<dbReference type="RNAct" id="Q9NP78">
    <property type="molecule type" value="protein"/>
</dbReference>
<dbReference type="Bgee" id="ENSG00000150967">
    <property type="expression patterns" value="Expressed in buccal mucosa cell and 171 other cell types or tissues"/>
</dbReference>
<dbReference type="ExpressionAtlas" id="Q9NP78">
    <property type="expression patterns" value="baseline and differential"/>
</dbReference>
<dbReference type="GO" id="GO:0005789">
    <property type="term" value="C:endoplasmic reticulum membrane"/>
    <property type="evidence" value="ECO:0000314"/>
    <property type="project" value="UniProtKB"/>
</dbReference>
<dbReference type="GO" id="GO:0043231">
    <property type="term" value="C:intracellular membrane-bounded organelle"/>
    <property type="evidence" value="ECO:0000314"/>
    <property type="project" value="HPA"/>
</dbReference>
<dbReference type="GO" id="GO:0005765">
    <property type="term" value="C:lysosomal membrane"/>
    <property type="evidence" value="ECO:0000314"/>
    <property type="project" value="UniProtKB"/>
</dbReference>
<dbReference type="GO" id="GO:0005764">
    <property type="term" value="C:lysosome"/>
    <property type="evidence" value="ECO:0000314"/>
    <property type="project" value="UniProtKB"/>
</dbReference>
<dbReference type="GO" id="GO:0016020">
    <property type="term" value="C:membrane"/>
    <property type="evidence" value="ECO:0000314"/>
    <property type="project" value="UniProtKB"/>
</dbReference>
<dbReference type="GO" id="GO:0015421">
    <property type="term" value="F:ABC-type oligopeptide transporter activity"/>
    <property type="evidence" value="ECO:0000314"/>
    <property type="project" value="UniProtKB"/>
</dbReference>
<dbReference type="GO" id="GO:0015440">
    <property type="term" value="F:ABC-type peptide transporter activity"/>
    <property type="evidence" value="ECO:0000314"/>
    <property type="project" value="UniProtKB"/>
</dbReference>
<dbReference type="GO" id="GO:0005524">
    <property type="term" value="F:ATP binding"/>
    <property type="evidence" value="ECO:0000314"/>
    <property type="project" value="UniProtKB"/>
</dbReference>
<dbReference type="GO" id="GO:0016887">
    <property type="term" value="F:ATP hydrolysis activity"/>
    <property type="evidence" value="ECO:0007669"/>
    <property type="project" value="InterPro"/>
</dbReference>
<dbReference type="GO" id="GO:0042803">
    <property type="term" value="F:protein homodimerization activity"/>
    <property type="evidence" value="ECO:0000314"/>
    <property type="project" value="UniProtKB"/>
</dbReference>
<dbReference type="GO" id="GO:0022857">
    <property type="term" value="F:transmembrane transporter activity"/>
    <property type="evidence" value="ECO:0000314"/>
    <property type="project" value="UniProtKB"/>
</dbReference>
<dbReference type="GO" id="GO:0006518">
    <property type="term" value="P:peptide metabolic process"/>
    <property type="evidence" value="ECO:0000314"/>
    <property type="project" value="UniProtKB"/>
</dbReference>
<dbReference type="GO" id="GO:0015833">
    <property type="term" value="P:peptide transport"/>
    <property type="evidence" value="ECO:0000314"/>
    <property type="project" value="UniProtKB"/>
</dbReference>
<dbReference type="GO" id="GO:0015031">
    <property type="term" value="P:protein transport"/>
    <property type="evidence" value="ECO:0007669"/>
    <property type="project" value="UniProtKB-KW"/>
</dbReference>
<dbReference type="GO" id="GO:0055085">
    <property type="term" value="P:transmembrane transport"/>
    <property type="evidence" value="ECO:0000318"/>
    <property type="project" value="GO_Central"/>
</dbReference>
<dbReference type="CDD" id="cd18784">
    <property type="entry name" value="ABC_6TM_ABCB9_like"/>
    <property type="match status" value="1"/>
</dbReference>
<dbReference type="CDD" id="cd03248">
    <property type="entry name" value="ABCC_TAP"/>
    <property type="match status" value="1"/>
</dbReference>
<dbReference type="FunFam" id="1.20.1560.10:FF:000031">
    <property type="entry name" value="ATP-binding cassette sub-family B member 9"/>
    <property type="match status" value="1"/>
</dbReference>
<dbReference type="FunFam" id="3.40.50.300:FF:000140">
    <property type="entry name" value="Lipid A export ATP-binding/permease protein MsbA"/>
    <property type="match status" value="1"/>
</dbReference>
<dbReference type="Gene3D" id="1.20.1560.10">
    <property type="entry name" value="ABC transporter type 1, transmembrane domain"/>
    <property type="match status" value="1"/>
</dbReference>
<dbReference type="Gene3D" id="3.40.50.300">
    <property type="entry name" value="P-loop containing nucleotide triphosphate hydrolases"/>
    <property type="match status" value="1"/>
</dbReference>
<dbReference type="InterPro" id="IPR003593">
    <property type="entry name" value="AAA+_ATPase"/>
</dbReference>
<dbReference type="InterPro" id="IPR011527">
    <property type="entry name" value="ABC1_TM_dom"/>
</dbReference>
<dbReference type="InterPro" id="IPR036640">
    <property type="entry name" value="ABC1_TM_sf"/>
</dbReference>
<dbReference type="InterPro" id="IPR003439">
    <property type="entry name" value="ABC_transporter-like_ATP-bd"/>
</dbReference>
<dbReference type="InterPro" id="IPR017871">
    <property type="entry name" value="ABC_transporter-like_CS"/>
</dbReference>
<dbReference type="InterPro" id="IPR030254">
    <property type="entry name" value="ABCB9_6-TMD"/>
</dbReference>
<dbReference type="InterPro" id="IPR027417">
    <property type="entry name" value="P-loop_NTPase"/>
</dbReference>
<dbReference type="InterPro" id="IPR039421">
    <property type="entry name" value="Type_1_exporter"/>
</dbReference>
<dbReference type="PANTHER" id="PTHR43394:SF21">
    <property type="entry name" value="ATP BINDING CASSETTE SUBFAMILY B MEMBER 9"/>
    <property type="match status" value="1"/>
</dbReference>
<dbReference type="PANTHER" id="PTHR43394">
    <property type="entry name" value="ATP-DEPENDENT PERMEASE MDL1, MITOCHONDRIAL"/>
    <property type="match status" value="1"/>
</dbReference>
<dbReference type="Pfam" id="PF00664">
    <property type="entry name" value="ABC_membrane"/>
    <property type="match status" value="1"/>
</dbReference>
<dbReference type="Pfam" id="PF00005">
    <property type="entry name" value="ABC_tran"/>
    <property type="match status" value="1"/>
</dbReference>
<dbReference type="PIRSF" id="PIRSF002773">
    <property type="entry name" value="ABC_prm/ATPase_B"/>
    <property type="match status" value="1"/>
</dbReference>
<dbReference type="SMART" id="SM00382">
    <property type="entry name" value="AAA"/>
    <property type="match status" value="1"/>
</dbReference>
<dbReference type="SUPFAM" id="SSF90123">
    <property type="entry name" value="ABC transporter transmembrane region"/>
    <property type="match status" value="1"/>
</dbReference>
<dbReference type="SUPFAM" id="SSF52540">
    <property type="entry name" value="P-loop containing nucleoside triphosphate hydrolases"/>
    <property type="match status" value="1"/>
</dbReference>
<dbReference type="PROSITE" id="PS50929">
    <property type="entry name" value="ABC_TM1F"/>
    <property type="match status" value="1"/>
</dbReference>
<dbReference type="PROSITE" id="PS00211">
    <property type="entry name" value="ABC_TRANSPORTER_1"/>
    <property type="match status" value="1"/>
</dbReference>
<dbReference type="PROSITE" id="PS50893">
    <property type="entry name" value="ABC_TRANSPORTER_2"/>
    <property type="match status" value="1"/>
</dbReference>
<evidence type="ECO:0000255" key="1">
    <source>
        <dbReference type="PROSITE-ProRule" id="PRU00434"/>
    </source>
</evidence>
<evidence type="ECO:0000255" key="2">
    <source>
        <dbReference type="PROSITE-ProRule" id="PRU00441"/>
    </source>
</evidence>
<evidence type="ECO:0000269" key="3">
    <source>
    </source>
</evidence>
<evidence type="ECO:0000269" key="4">
    <source>
    </source>
</evidence>
<evidence type="ECO:0000269" key="5">
    <source>
    </source>
</evidence>
<evidence type="ECO:0000269" key="6">
    <source>
    </source>
</evidence>
<evidence type="ECO:0000269" key="7">
    <source>
    </source>
</evidence>
<evidence type="ECO:0000269" key="8">
    <source>
    </source>
</evidence>
<evidence type="ECO:0000269" key="9">
    <source>
    </source>
</evidence>
<evidence type="ECO:0000269" key="10">
    <source>
    </source>
</evidence>
<evidence type="ECO:0000269" key="11">
    <source>
    </source>
</evidence>
<evidence type="ECO:0000269" key="12">
    <source>
    </source>
</evidence>
<evidence type="ECO:0000269" key="13">
    <source>
    </source>
</evidence>
<evidence type="ECO:0000269" key="14">
    <source>
    </source>
</evidence>
<evidence type="ECO:0000269" key="15">
    <source>
    </source>
</evidence>
<evidence type="ECO:0000269" key="16">
    <source>
    </source>
</evidence>
<evidence type="ECO:0000269" key="17">
    <source>
    </source>
</evidence>
<evidence type="ECO:0000269" key="18">
    <source>
    </source>
</evidence>
<evidence type="ECO:0000269" key="19">
    <source>
    </source>
</evidence>
<evidence type="ECO:0000303" key="20">
    <source>
    </source>
</evidence>
<evidence type="ECO:0000303" key="21">
    <source>
    </source>
</evidence>
<evidence type="ECO:0000303" key="22">
    <source>
    </source>
</evidence>
<evidence type="ECO:0000303" key="23">
    <source>
    </source>
</evidence>
<evidence type="ECO:0000303" key="24">
    <source>
    </source>
</evidence>
<evidence type="ECO:0000305" key="25"/>
<evidence type="ECO:0000305" key="26">
    <source>
    </source>
</evidence>
<evidence type="ECO:0000312" key="27">
    <source>
        <dbReference type="HGNC" id="HGNC:50"/>
    </source>
</evidence>
<name>ABCB9_HUMAN</name>
<sequence length="766" mass="84475">MRLWKAVVVTLAFMSVDICVTTAIYVFSHLDRSLLEDIRHFNIFDSVLDLWAACLYRSCLLLGATIGVAKNSALGPRRLRASWLVITLVCLFVGIYAMVKLLLFSEVRRPIRDPWFWALFVWTYISLGASFLLWWLLSTVRPGTQALEPGAATEAEGFPGSGRPPPEQASGATLQKLLSYTKPDVAFLVAASFFLIVAALGETFLPYYTGRAIDGIVIQKSMDQFSTAVVIVCLLAIGSSFAAGIRGGIFTLIFARLNIRLRNCLFRSLVSQETSFFDENRTGDLISRLTSDTTMVSDLVSQNINVFLRNTVKVTGVVVFMFSLSWQLSLVTFMGFPIIMMVSNIYGKYYKRLSKEVQNALARASNTAEETISAMKTVRSFANEEEEAEVYLRKLQQVYKLNRKEAAAYMYYVWGSGLTLLVVQVSILYYGGHLVISGQMTSGNLIAFIIYEFVLGDCMESVGSVYSGLMQGVGAAEKVFEFIDRQPTMVHDGSLAPDHLEGRVDFENVTFTYRTRPHTQVLQNVSFSLSPGKVTALVGPSGSGKSSCVNILENFYPLEGGRVLLDGKPISAYDHKYLHRVISLVSQEPVLFARSITDNISYGLPTVPFEMVVEAAQKANAHGFIMELQDGYSTETGEKGAQLSGGQKQRVAMARALVRNPPVLILDEATSALDAESEYLIQQAIHGNLQKHTVLIIAHRLSTVEHAHLIVVLDKGRVVQQGTHQQLLAQGGLYAKLVQRQMLGLQPAADFTAGHNEPVANGSHKA</sequence>